<gene>
    <name evidence="1" type="primary">dxs</name>
    <name type="ordered locus">SF0357</name>
    <name type="ordered locus">S0365</name>
</gene>
<feature type="chain" id="PRO_0000189153" description="1-deoxy-D-xylulose-5-phosphate synthase">
    <location>
        <begin position="1"/>
        <end position="620"/>
    </location>
</feature>
<feature type="binding site" evidence="1">
    <location>
        <position position="80"/>
    </location>
    <ligand>
        <name>thiamine diphosphate</name>
        <dbReference type="ChEBI" id="CHEBI:58937"/>
    </ligand>
</feature>
<feature type="binding site" evidence="1">
    <location>
        <begin position="121"/>
        <end position="123"/>
    </location>
    <ligand>
        <name>thiamine diphosphate</name>
        <dbReference type="ChEBI" id="CHEBI:58937"/>
    </ligand>
</feature>
<feature type="binding site" evidence="1">
    <location>
        <position position="152"/>
    </location>
    <ligand>
        <name>Mg(2+)</name>
        <dbReference type="ChEBI" id="CHEBI:18420"/>
    </ligand>
</feature>
<feature type="binding site" evidence="1">
    <location>
        <begin position="153"/>
        <end position="154"/>
    </location>
    <ligand>
        <name>thiamine diphosphate</name>
        <dbReference type="ChEBI" id="CHEBI:58937"/>
    </ligand>
</feature>
<feature type="binding site" evidence="1">
    <location>
        <position position="181"/>
    </location>
    <ligand>
        <name>Mg(2+)</name>
        <dbReference type="ChEBI" id="CHEBI:18420"/>
    </ligand>
</feature>
<feature type="binding site" evidence="1">
    <location>
        <position position="181"/>
    </location>
    <ligand>
        <name>thiamine diphosphate</name>
        <dbReference type="ChEBI" id="CHEBI:58937"/>
    </ligand>
</feature>
<feature type="binding site" evidence="1">
    <location>
        <position position="288"/>
    </location>
    <ligand>
        <name>thiamine diphosphate</name>
        <dbReference type="ChEBI" id="CHEBI:58937"/>
    </ligand>
</feature>
<feature type="binding site" evidence="1">
    <location>
        <position position="370"/>
    </location>
    <ligand>
        <name>thiamine diphosphate</name>
        <dbReference type="ChEBI" id="CHEBI:58937"/>
    </ligand>
</feature>
<feature type="sequence conflict" description="In Ref. 2; AAP15891." evidence="2" ref="2">
    <original>N</original>
    <variation>K</variation>
    <location>
        <position position="25"/>
    </location>
</feature>
<comment type="function">
    <text evidence="1">Catalyzes the acyloin condensation reaction between C atoms 2 and 3 of pyruvate and glyceraldehyde 3-phosphate to yield 1-deoxy-D-xylulose-5-phosphate (DXP).</text>
</comment>
<comment type="catalytic activity">
    <reaction evidence="1">
        <text>D-glyceraldehyde 3-phosphate + pyruvate + H(+) = 1-deoxy-D-xylulose 5-phosphate + CO2</text>
        <dbReference type="Rhea" id="RHEA:12605"/>
        <dbReference type="ChEBI" id="CHEBI:15361"/>
        <dbReference type="ChEBI" id="CHEBI:15378"/>
        <dbReference type="ChEBI" id="CHEBI:16526"/>
        <dbReference type="ChEBI" id="CHEBI:57792"/>
        <dbReference type="ChEBI" id="CHEBI:59776"/>
        <dbReference type="EC" id="2.2.1.7"/>
    </reaction>
</comment>
<comment type="cofactor">
    <cofactor evidence="1">
        <name>Mg(2+)</name>
        <dbReference type="ChEBI" id="CHEBI:18420"/>
    </cofactor>
    <text evidence="1">Binds 1 Mg(2+) ion per subunit.</text>
</comment>
<comment type="cofactor">
    <cofactor evidence="1">
        <name>thiamine diphosphate</name>
        <dbReference type="ChEBI" id="CHEBI:58937"/>
    </cofactor>
    <text evidence="1">Binds 1 thiamine pyrophosphate per subunit.</text>
</comment>
<comment type="pathway">
    <text evidence="1">Metabolic intermediate biosynthesis; 1-deoxy-D-xylulose 5-phosphate biosynthesis; 1-deoxy-D-xylulose 5-phosphate from D-glyceraldehyde 3-phosphate and pyruvate: step 1/1.</text>
</comment>
<comment type="subunit">
    <text evidence="1">Homodimer.</text>
</comment>
<comment type="similarity">
    <text evidence="1">Belongs to the transketolase family. DXPS subfamily.</text>
</comment>
<organism>
    <name type="scientific">Shigella flexneri</name>
    <dbReference type="NCBI Taxonomy" id="623"/>
    <lineage>
        <taxon>Bacteria</taxon>
        <taxon>Pseudomonadati</taxon>
        <taxon>Pseudomonadota</taxon>
        <taxon>Gammaproteobacteria</taxon>
        <taxon>Enterobacterales</taxon>
        <taxon>Enterobacteriaceae</taxon>
        <taxon>Shigella</taxon>
    </lineage>
</organism>
<name>DXS_SHIFL</name>
<protein>
    <recommendedName>
        <fullName evidence="1">1-deoxy-D-xylulose-5-phosphate synthase</fullName>
        <ecNumber evidence="1">2.2.1.7</ecNumber>
    </recommendedName>
    <alternativeName>
        <fullName evidence="1">1-deoxyxylulose-5-phosphate synthase</fullName>
        <shortName evidence="1">DXP synthase</shortName>
        <shortName evidence="1">DXPS</shortName>
    </alternativeName>
</protein>
<sequence>MSFDIAKYPTLALVDSTQELRLLPNESLPKLCDELRRYLLDSVSRSSGHFASGLGTVELTVALHYVYNTPFDQLIWDVGHQAYPHKILTGRRDKIGTIRQKGGLHPFPWRGESEYDVLSVGHSSTSISAGIGIAVAAEKEGKNRRTVCVIGDGAITAGMAFEAMNHAGDIRPDMLVVLNDNEMSISENVGALNNHLAQLLSGKLYSSLREGGKKVFSGVPPIKELLKRTEEHIKGMVVPGTLFEELGFNYIGPVDGHDVLGLITTLKNMRDLKGPQFLHIMTKKGRGYEPAEKDPITFHAVPKFDPSSGCLPKSSGGLPSYSKIFGDWLCETAAKDNKLMAITPAMREGSGMVEFSRKFPDRYFDVAIAEQHAVTFAAGLAIGGYKPIVAIYSTFLQRAYDQVLHDVAIQKLPVLFAIDRAGIVGADGQTHQGAFDLSYLRCIPEMVIMTPSDENECRQMLYTGYHYNDGPSAVRYPRGNAVGVELTPLEKLPIGKGIVKRRGEKLVILNFGTLMPETAKVAESLNATLVDMRFVKPLDEALILEMAASHEALVTVEENAIMGGAGSGVNEVLMAHRKPVPVLNIGLPDFFIPQGTQEEMRAELGLDAAGMEAKIKAWLA</sequence>
<accession>Q83SG2</accession>
<accession>Q7UDJ7</accession>
<keyword id="KW-0414">Isoprene biosynthesis</keyword>
<keyword id="KW-0460">Magnesium</keyword>
<keyword id="KW-0479">Metal-binding</keyword>
<keyword id="KW-1185">Reference proteome</keyword>
<keyword id="KW-0784">Thiamine biosynthesis</keyword>
<keyword id="KW-0786">Thiamine pyrophosphate</keyword>
<keyword id="KW-0808">Transferase</keyword>
<evidence type="ECO:0000255" key="1">
    <source>
        <dbReference type="HAMAP-Rule" id="MF_00315"/>
    </source>
</evidence>
<evidence type="ECO:0000305" key="2"/>
<reference key="1">
    <citation type="journal article" date="2002" name="Nucleic Acids Res.">
        <title>Genome sequence of Shigella flexneri 2a: insights into pathogenicity through comparison with genomes of Escherichia coli K12 and O157.</title>
        <authorList>
            <person name="Jin Q."/>
            <person name="Yuan Z."/>
            <person name="Xu J."/>
            <person name="Wang Y."/>
            <person name="Shen Y."/>
            <person name="Lu W."/>
            <person name="Wang J."/>
            <person name="Liu H."/>
            <person name="Yang J."/>
            <person name="Yang F."/>
            <person name="Zhang X."/>
            <person name="Zhang J."/>
            <person name="Yang G."/>
            <person name="Wu H."/>
            <person name="Qu D."/>
            <person name="Dong J."/>
            <person name="Sun L."/>
            <person name="Xue Y."/>
            <person name="Zhao A."/>
            <person name="Gao Y."/>
            <person name="Zhu J."/>
            <person name="Kan B."/>
            <person name="Ding K."/>
            <person name="Chen S."/>
            <person name="Cheng H."/>
            <person name="Yao Z."/>
            <person name="He B."/>
            <person name="Chen R."/>
            <person name="Ma D."/>
            <person name="Qiang B."/>
            <person name="Wen Y."/>
            <person name="Hou Y."/>
            <person name="Yu J."/>
        </authorList>
    </citation>
    <scope>NUCLEOTIDE SEQUENCE [LARGE SCALE GENOMIC DNA]</scope>
    <source>
        <strain>301 / Serotype 2a</strain>
    </source>
</reference>
<reference key="2">
    <citation type="journal article" date="2003" name="Infect. Immun.">
        <title>Complete genome sequence and comparative genomics of Shigella flexneri serotype 2a strain 2457T.</title>
        <authorList>
            <person name="Wei J."/>
            <person name="Goldberg M.B."/>
            <person name="Burland V."/>
            <person name="Venkatesan M.M."/>
            <person name="Deng W."/>
            <person name="Fournier G."/>
            <person name="Mayhew G.F."/>
            <person name="Plunkett G. III"/>
            <person name="Rose D.J."/>
            <person name="Darling A."/>
            <person name="Mau B."/>
            <person name="Perna N.T."/>
            <person name="Payne S.M."/>
            <person name="Runyen-Janecky L.J."/>
            <person name="Zhou S."/>
            <person name="Schwartz D.C."/>
            <person name="Blattner F.R."/>
        </authorList>
    </citation>
    <scope>NUCLEOTIDE SEQUENCE [LARGE SCALE GENOMIC DNA]</scope>
    <source>
        <strain>ATCC 700930 / 2457T / Serotype 2a</strain>
    </source>
</reference>
<dbReference type="EC" id="2.2.1.7" evidence="1"/>
<dbReference type="EMBL" id="AE005674">
    <property type="protein sequence ID" value="AAN42015.1"/>
    <property type="molecule type" value="Genomic_DNA"/>
</dbReference>
<dbReference type="EMBL" id="AE014073">
    <property type="protein sequence ID" value="AAP15891.1"/>
    <property type="molecule type" value="Genomic_DNA"/>
</dbReference>
<dbReference type="RefSeq" id="NP_706308.1">
    <property type="nucleotide sequence ID" value="NC_004337.2"/>
</dbReference>
<dbReference type="RefSeq" id="WP_000006840.1">
    <property type="nucleotide sequence ID" value="NZ_CP123365.1"/>
</dbReference>
<dbReference type="SMR" id="Q83SG2"/>
<dbReference type="STRING" id="198214.SF0357"/>
<dbReference type="PaxDb" id="198214-SF0357"/>
<dbReference type="GeneID" id="1027687"/>
<dbReference type="KEGG" id="sfl:SF0357"/>
<dbReference type="KEGG" id="sfx:S0365"/>
<dbReference type="PATRIC" id="fig|198214.7.peg.408"/>
<dbReference type="HOGENOM" id="CLU_009227_1_4_6"/>
<dbReference type="UniPathway" id="UPA00064">
    <property type="reaction ID" value="UER00091"/>
</dbReference>
<dbReference type="Proteomes" id="UP000001006">
    <property type="component" value="Chromosome"/>
</dbReference>
<dbReference type="Proteomes" id="UP000002673">
    <property type="component" value="Chromosome"/>
</dbReference>
<dbReference type="GO" id="GO:0005829">
    <property type="term" value="C:cytosol"/>
    <property type="evidence" value="ECO:0007669"/>
    <property type="project" value="TreeGrafter"/>
</dbReference>
<dbReference type="GO" id="GO:0008661">
    <property type="term" value="F:1-deoxy-D-xylulose-5-phosphate synthase activity"/>
    <property type="evidence" value="ECO:0007669"/>
    <property type="project" value="UniProtKB-UniRule"/>
</dbReference>
<dbReference type="GO" id="GO:0000287">
    <property type="term" value="F:magnesium ion binding"/>
    <property type="evidence" value="ECO:0007669"/>
    <property type="project" value="UniProtKB-UniRule"/>
</dbReference>
<dbReference type="GO" id="GO:0030976">
    <property type="term" value="F:thiamine pyrophosphate binding"/>
    <property type="evidence" value="ECO:0007669"/>
    <property type="project" value="UniProtKB-UniRule"/>
</dbReference>
<dbReference type="GO" id="GO:0052865">
    <property type="term" value="P:1-deoxy-D-xylulose 5-phosphate biosynthetic process"/>
    <property type="evidence" value="ECO:0007669"/>
    <property type="project" value="UniProtKB-UniPathway"/>
</dbReference>
<dbReference type="GO" id="GO:0019288">
    <property type="term" value="P:isopentenyl diphosphate biosynthetic process, methylerythritol 4-phosphate pathway"/>
    <property type="evidence" value="ECO:0007669"/>
    <property type="project" value="TreeGrafter"/>
</dbReference>
<dbReference type="GO" id="GO:0016114">
    <property type="term" value="P:terpenoid biosynthetic process"/>
    <property type="evidence" value="ECO:0007669"/>
    <property type="project" value="UniProtKB-UniRule"/>
</dbReference>
<dbReference type="GO" id="GO:0009228">
    <property type="term" value="P:thiamine biosynthetic process"/>
    <property type="evidence" value="ECO:0007669"/>
    <property type="project" value="UniProtKB-UniRule"/>
</dbReference>
<dbReference type="CDD" id="cd02007">
    <property type="entry name" value="TPP_DXS"/>
    <property type="match status" value="1"/>
</dbReference>
<dbReference type="CDD" id="cd07033">
    <property type="entry name" value="TPP_PYR_DXS_TK_like"/>
    <property type="match status" value="1"/>
</dbReference>
<dbReference type="FunFam" id="3.40.50.920:FF:000002">
    <property type="entry name" value="1-deoxy-D-xylulose-5-phosphate synthase"/>
    <property type="match status" value="1"/>
</dbReference>
<dbReference type="FunFam" id="3.40.50.970:FF:000005">
    <property type="entry name" value="1-deoxy-D-xylulose-5-phosphate synthase"/>
    <property type="match status" value="1"/>
</dbReference>
<dbReference type="Gene3D" id="3.40.50.920">
    <property type="match status" value="1"/>
</dbReference>
<dbReference type="Gene3D" id="3.40.50.970">
    <property type="match status" value="2"/>
</dbReference>
<dbReference type="HAMAP" id="MF_00315">
    <property type="entry name" value="DXP_synth"/>
    <property type="match status" value="1"/>
</dbReference>
<dbReference type="InterPro" id="IPR005477">
    <property type="entry name" value="Dxylulose-5-P_synthase"/>
</dbReference>
<dbReference type="InterPro" id="IPR029061">
    <property type="entry name" value="THDP-binding"/>
</dbReference>
<dbReference type="InterPro" id="IPR009014">
    <property type="entry name" value="Transketo_C/PFOR_II"/>
</dbReference>
<dbReference type="InterPro" id="IPR005475">
    <property type="entry name" value="Transketolase-like_Pyr-bd"/>
</dbReference>
<dbReference type="InterPro" id="IPR020826">
    <property type="entry name" value="Transketolase_BS"/>
</dbReference>
<dbReference type="InterPro" id="IPR033248">
    <property type="entry name" value="Transketolase_C"/>
</dbReference>
<dbReference type="InterPro" id="IPR049557">
    <property type="entry name" value="Transketolase_CS"/>
</dbReference>
<dbReference type="NCBIfam" id="TIGR00204">
    <property type="entry name" value="dxs"/>
    <property type="match status" value="1"/>
</dbReference>
<dbReference type="NCBIfam" id="NF003933">
    <property type="entry name" value="PRK05444.2-2"/>
    <property type="match status" value="1"/>
</dbReference>
<dbReference type="PANTHER" id="PTHR43322">
    <property type="entry name" value="1-D-DEOXYXYLULOSE 5-PHOSPHATE SYNTHASE-RELATED"/>
    <property type="match status" value="1"/>
</dbReference>
<dbReference type="PANTHER" id="PTHR43322:SF5">
    <property type="entry name" value="1-DEOXY-D-XYLULOSE-5-PHOSPHATE SYNTHASE, CHLOROPLASTIC"/>
    <property type="match status" value="1"/>
</dbReference>
<dbReference type="Pfam" id="PF13292">
    <property type="entry name" value="DXP_synthase_N"/>
    <property type="match status" value="1"/>
</dbReference>
<dbReference type="Pfam" id="PF02779">
    <property type="entry name" value="Transket_pyr"/>
    <property type="match status" value="1"/>
</dbReference>
<dbReference type="Pfam" id="PF02780">
    <property type="entry name" value="Transketolase_C"/>
    <property type="match status" value="1"/>
</dbReference>
<dbReference type="SMART" id="SM00861">
    <property type="entry name" value="Transket_pyr"/>
    <property type="match status" value="1"/>
</dbReference>
<dbReference type="SUPFAM" id="SSF52518">
    <property type="entry name" value="Thiamin diphosphate-binding fold (THDP-binding)"/>
    <property type="match status" value="2"/>
</dbReference>
<dbReference type="SUPFAM" id="SSF52922">
    <property type="entry name" value="TK C-terminal domain-like"/>
    <property type="match status" value="1"/>
</dbReference>
<dbReference type="PROSITE" id="PS00801">
    <property type="entry name" value="TRANSKETOLASE_1"/>
    <property type="match status" value="1"/>
</dbReference>
<dbReference type="PROSITE" id="PS00802">
    <property type="entry name" value="TRANSKETOLASE_2"/>
    <property type="match status" value="1"/>
</dbReference>
<proteinExistence type="inferred from homology"/>